<sequence length="575" mass="63485">MNQTRVFLIFAWLMVAALLWMEWGKDKAAANAPTPIASQAVPAARDPDAAAPAANVPSAQAIPQAGSPAAVPGTSTTTATATPVAAGAAPAITLTSDVLRLKLDGRSVLDAELLQFPQTKDGTEPVKLLTEDAAHPYNATSGWASERSPVPGVGGFRAEQPGTTFELAKGQNTLVVPFVWNGPNGVSIRRIFTLQRGSYAISIKDEVINKSDAAWNGYVFRKLSRVPTILSRGMTNPDSFSFNGATWYSPQEGYERRAFKDYMDDGGLNRQITGGWVALLQHHFFTAWIPQKDQASLYVLAQDGPRDVAELRGPAFTVAPGQSASTEARLWVGPKLVSLLAKEDVKGLDRVVDYSRFSIMAIIGQGLFWVLSHLHSFLHNWGWAIIGLVLLLRLALYPLSAAQYKSGAKMRRFQPRLAQLKERYGDDRQKYQQATMELFKKEKINPMGGCLPLLIQMPIFFALYWVLVESVELRQAPWLGWIQDLTARDPYFILPVLNIAIMWATQKLTPTPGMDPMQAKMMQFMPLVFGVMMAFMPAGLVLYWVVNGGLGLLIQWWMIRQHGEKPSKIIQANAK</sequence>
<name>YIDC_XANCB</name>
<evidence type="ECO:0000255" key="1">
    <source>
        <dbReference type="HAMAP-Rule" id="MF_01810"/>
    </source>
</evidence>
<dbReference type="EMBL" id="AM920689">
    <property type="protein sequence ID" value="CAP53839.1"/>
    <property type="molecule type" value="Genomic_DNA"/>
</dbReference>
<dbReference type="SMR" id="B0RMM6"/>
<dbReference type="KEGG" id="xca:xcc-b100_4466"/>
<dbReference type="HOGENOM" id="CLU_016535_3_0_6"/>
<dbReference type="Proteomes" id="UP000001188">
    <property type="component" value="Chromosome"/>
</dbReference>
<dbReference type="GO" id="GO:0005886">
    <property type="term" value="C:plasma membrane"/>
    <property type="evidence" value="ECO:0007669"/>
    <property type="project" value="UniProtKB-SubCell"/>
</dbReference>
<dbReference type="GO" id="GO:0032977">
    <property type="term" value="F:membrane insertase activity"/>
    <property type="evidence" value="ECO:0007669"/>
    <property type="project" value="InterPro"/>
</dbReference>
<dbReference type="GO" id="GO:0051205">
    <property type="term" value="P:protein insertion into membrane"/>
    <property type="evidence" value="ECO:0007669"/>
    <property type="project" value="TreeGrafter"/>
</dbReference>
<dbReference type="GO" id="GO:0015031">
    <property type="term" value="P:protein transport"/>
    <property type="evidence" value="ECO:0007669"/>
    <property type="project" value="UniProtKB-KW"/>
</dbReference>
<dbReference type="CDD" id="cd20070">
    <property type="entry name" value="5TM_YidC_Alb3"/>
    <property type="match status" value="1"/>
</dbReference>
<dbReference type="CDD" id="cd19961">
    <property type="entry name" value="EcYidC-like_peri"/>
    <property type="match status" value="1"/>
</dbReference>
<dbReference type="Gene3D" id="2.70.98.90">
    <property type="match status" value="1"/>
</dbReference>
<dbReference type="HAMAP" id="MF_01810">
    <property type="entry name" value="YidC_type1"/>
    <property type="match status" value="1"/>
</dbReference>
<dbReference type="InterPro" id="IPR019998">
    <property type="entry name" value="Membr_insert_YidC"/>
</dbReference>
<dbReference type="InterPro" id="IPR028053">
    <property type="entry name" value="Membr_insert_YidC_N"/>
</dbReference>
<dbReference type="InterPro" id="IPR001708">
    <property type="entry name" value="YidC/ALB3/OXA1/COX18"/>
</dbReference>
<dbReference type="InterPro" id="IPR028055">
    <property type="entry name" value="YidC/Oxa/ALB_C"/>
</dbReference>
<dbReference type="InterPro" id="IPR047196">
    <property type="entry name" value="YidC_ALB_C"/>
</dbReference>
<dbReference type="InterPro" id="IPR038221">
    <property type="entry name" value="YidC_periplasmic_sf"/>
</dbReference>
<dbReference type="NCBIfam" id="NF002352">
    <property type="entry name" value="PRK01318.1-3"/>
    <property type="match status" value="1"/>
</dbReference>
<dbReference type="NCBIfam" id="TIGR03593">
    <property type="entry name" value="yidC_nterm"/>
    <property type="match status" value="1"/>
</dbReference>
<dbReference type="NCBIfam" id="TIGR03592">
    <property type="entry name" value="yidC_oxa1_cterm"/>
    <property type="match status" value="1"/>
</dbReference>
<dbReference type="PANTHER" id="PTHR12428:SF65">
    <property type="entry name" value="CYTOCHROME C OXIDASE ASSEMBLY PROTEIN COX18, MITOCHONDRIAL"/>
    <property type="match status" value="1"/>
</dbReference>
<dbReference type="PANTHER" id="PTHR12428">
    <property type="entry name" value="OXA1"/>
    <property type="match status" value="1"/>
</dbReference>
<dbReference type="Pfam" id="PF02096">
    <property type="entry name" value="60KD_IMP"/>
    <property type="match status" value="1"/>
</dbReference>
<dbReference type="Pfam" id="PF14849">
    <property type="entry name" value="YidC_periplas"/>
    <property type="match status" value="1"/>
</dbReference>
<dbReference type="PRINTS" id="PR00701">
    <property type="entry name" value="60KDINNERMP"/>
</dbReference>
<dbReference type="PRINTS" id="PR01900">
    <property type="entry name" value="YIDCPROTEIN"/>
</dbReference>
<protein>
    <recommendedName>
        <fullName evidence="1">Membrane protein insertase YidC</fullName>
    </recommendedName>
    <alternativeName>
        <fullName evidence="1">Foldase YidC</fullName>
    </alternativeName>
    <alternativeName>
        <fullName evidence="1">Membrane integrase YidC</fullName>
    </alternativeName>
    <alternativeName>
        <fullName evidence="1">Membrane protein YidC</fullName>
    </alternativeName>
</protein>
<organism>
    <name type="scientific">Xanthomonas campestris pv. campestris (strain B100)</name>
    <dbReference type="NCBI Taxonomy" id="509169"/>
    <lineage>
        <taxon>Bacteria</taxon>
        <taxon>Pseudomonadati</taxon>
        <taxon>Pseudomonadota</taxon>
        <taxon>Gammaproteobacteria</taxon>
        <taxon>Lysobacterales</taxon>
        <taxon>Lysobacteraceae</taxon>
        <taxon>Xanthomonas</taxon>
    </lineage>
</organism>
<keyword id="KW-0997">Cell inner membrane</keyword>
<keyword id="KW-1003">Cell membrane</keyword>
<keyword id="KW-0143">Chaperone</keyword>
<keyword id="KW-0472">Membrane</keyword>
<keyword id="KW-0653">Protein transport</keyword>
<keyword id="KW-0812">Transmembrane</keyword>
<keyword id="KW-1133">Transmembrane helix</keyword>
<keyword id="KW-0813">Transport</keyword>
<feature type="chain" id="PRO_1000187715" description="Membrane protein insertase YidC">
    <location>
        <begin position="1"/>
        <end position="575"/>
    </location>
</feature>
<feature type="transmembrane region" description="Helical" evidence="1">
    <location>
        <begin position="6"/>
        <end position="26"/>
    </location>
</feature>
<feature type="transmembrane region" description="Helical" evidence="1">
    <location>
        <begin position="357"/>
        <end position="377"/>
    </location>
</feature>
<feature type="transmembrane region" description="Helical" evidence="1">
    <location>
        <begin position="381"/>
        <end position="401"/>
    </location>
</feature>
<feature type="transmembrane region" description="Helical" evidence="1">
    <location>
        <begin position="448"/>
        <end position="468"/>
    </location>
</feature>
<feature type="transmembrane region" description="Helical" evidence="1">
    <location>
        <begin position="490"/>
        <end position="510"/>
    </location>
</feature>
<feature type="transmembrane region" description="Helical" evidence="1">
    <location>
        <begin position="526"/>
        <end position="546"/>
    </location>
</feature>
<reference key="1">
    <citation type="journal article" date="2008" name="J. Biotechnol.">
        <title>The genome of Xanthomonas campestris pv. campestris B100 and its use for the reconstruction of metabolic pathways involved in xanthan biosynthesis.</title>
        <authorList>
            <person name="Vorhoelter F.-J."/>
            <person name="Schneiker S."/>
            <person name="Goesmann A."/>
            <person name="Krause L."/>
            <person name="Bekel T."/>
            <person name="Kaiser O."/>
            <person name="Linke B."/>
            <person name="Patschkowski T."/>
            <person name="Rueckert C."/>
            <person name="Schmid J."/>
            <person name="Sidhu V.K."/>
            <person name="Sieber V."/>
            <person name="Tauch A."/>
            <person name="Watt S.A."/>
            <person name="Weisshaar B."/>
            <person name="Becker A."/>
            <person name="Niehaus K."/>
            <person name="Puehler A."/>
        </authorList>
    </citation>
    <scope>NUCLEOTIDE SEQUENCE [LARGE SCALE GENOMIC DNA]</scope>
    <source>
        <strain>B100</strain>
    </source>
</reference>
<comment type="function">
    <text evidence="1">Required for the insertion and/or proper folding and/or complex formation of integral membrane proteins into the membrane. Involved in integration of membrane proteins that insert both dependently and independently of the Sec translocase complex, as well as at least some lipoproteins. Aids folding of multispanning membrane proteins.</text>
</comment>
<comment type="subunit">
    <text evidence="1">Interacts with the Sec translocase complex via SecD. Specifically interacts with transmembrane segments of nascent integral membrane proteins during membrane integration.</text>
</comment>
<comment type="subcellular location">
    <subcellularLocation>
        <location evidence="1">Cell inner membrane</location>
        <topology evidence="1">Multi-pass membrane protein</topology>
    </subcellularLocation>
</comment>
<comment type="similarity">
    <text evidence="1">Belongs to the OXA1/ALB3/YidC family. Type 1 subfamily.</text>
</comment>
<gene>
    <name evidence="1" type="primary">yidC</name>
    <name type="ordered locus">xcc-b100_4466</name>
</gene>
<accession>B0RMM6</accession>
<proteinExistence type="inferred from homology"/>